<protein>
    <recommendedName>
        <fullName>VIP peptides</fullName>
    </recommendedName>
    <component>
        <recommendedName>
            <fullName>Intestinal peptide PHI-27</fullName>
        </recommendedName>
        <alternativeName>
            <fullName>Peptide histidine isoleucinamide 27</fullName>
        </alternativeName>
    </component>
    <component>
        <recommendedName>
            <fullName>Vasoactive intestinal peptide</fullName>
            <shortName>VIP</shortName>
        </recommendedName>
        <alternativeName>
            <fullName>Vasoactive intestinal polypeptide</fullName>
        </alternativeName>
    </component>
</protein>
<accession>P01284</accession>
<accession>Q9TRN0</accession>
<keyword id="KW-0027">Amidation</keyword>
<keyword id="KW-0165">Cleavage on pair of basic residues</keyword>
<keyword id="KW-0903">Direct protein sequencing</keyword>
<keyword id="KW-0372">Hormone</keyword>
<keyword id="KW-1185">Reference proteome</keyword>
<keyword id="KW-0964">Secreted</keyword>
<name>VIP_PIG</name>
<evidence type="ECO:0000250" key="1">
    <source>
        <dbReference type="UniProtKB" id="P01282"/>
    </source>
</evidence>
<evidence type="ECO:0000269" key="2">
    <source>
    </source>
</evidence>
<evidence type="ECO:0000269" key="3">
    <source>
    </source>
</evidence>
<evidence type="ECO:0000305" key="4"/>
<dbReference type="PIR" id="A01549">
    <property type="entry name" value="VRPG"/>
</dbReference>
<dbReference type="BMRB" id="P01284"/>
<dbReference type="STRING" id="9823.ENSSSCP00000004405"/>
<dbReference type="PaxDb" id="9823-ENSSSCP00000004405"/>
<dbReference type="InParanoid" id="P01284"/>
<dbReference type="Proteomes" id="UP000008227">
    <property type="component" value="Unplaced"/>
</dbReference>
<dbReference type="Proteomes" id="UP000314985">
    <property type="component" value="Unplaced"/>
</dbReference>
<dbReference type="Proteomes" id="UP000694570">
    <property type="component" value="Unplaced"/>
</dbReference>
<dbReference type="Proteomes" id="UP000694571">
    <property type="component" value="Unplaced"/>
</dbReference>
<dbReference type="Proteomes" id="UP000694720">
    <property type="component" value="Unplaced"/>
</dbReference>
<dbReference type="Proteomes" id="UP000694722">
    <property type="component" value="Unplaced"/>
</dbReference>
<dbReference type="Proteomes" id="UP000694723">
    <property type="component" value="Unplaced"/>
</dbReference>
<dbReference type="Proteomes" id="UP000694724">
    <property type="component" value="Unplaced"/>
</dbReference>
<dbReference type="Proteomes" id="UP000694725">
    <property type="component" value="Unplaced"/>
</dbReference>
<dbReference type="Proteomes" id="UP000694726">
    <property type="component" value="Unplaced"/>
</dbReference>
<dbReference type="Proteomes" id="UP000694727">
    <property type="component" value="Unplaced"/>
</dbReference>
<dbReference type="Proteomes" id="UP000694728">
    <property type="component" value="Unplaced"/>
</dbReference>
<dbReference type="GO" id="GO:0005576">
    <property type="term" value="C:extracellular region"/>
    <property type="evidence" value="ECO:0007669"/>
    <property type="project" value="UniProtKB-SubCell"/>
</dbReference>
<dbReference type="GO" id="GO:0005179">
    <property type="term" value="F:hormone activity"/>
    <property type="evidence" value="ECO:0000314"/>
    <property type="project" value="BHF-UCL"/>
</dbReference>
<dbReference type="GO" id="GO:0005184">
    <property type="term" value="F:neuropeptide hormone activity"/>
    <property type="evidence" value="ECO:0000250"/>
    <property type="project" value="UniProtKB"/>
</dbReference>
<dbReference type="GO" id="GO:0031891">
    <property type="term" value="F:type 1 vasoactive intestinal polypeptide receptor binding"/>
    <property type="evidence" value="ECO:0000250"/>
    <property type="project" value="UniProtKB"/>
</dbReference>
<dbReference type="GO" id="GO:0007189">
    <property type="term" value="P:adenylate cyclase-activating G protein-coupled receptor signaling pathway"/>
    <property type="evidence" value="ECO:0000314"/>
    <property type="project" value="BHF-UCL"/>
</dbReference>
<dbReference type="GO" id="GO:0048255">
    <property type="term" value="P:mRNA stabilization"/>
    <property type="evidence" value="ECO:0000250"/>
    <property type="project" value="AgBase"/>
</dbReference>
<dbReference type="GO" id="GO:0045732">
    <property type="term" value="P:positive regulation of protein catabolic process"/>
    <property type="evidence" value="ECO:0000314"/>
    <property type="project" value="BHF-UCL"/>
</dbReference>
<dbReference type="GO" id="GO:0070459">
    <property type="term" value="P:prolactin secretion"/>
    <property type="evidence" value="ECO:0000250"/>
    <property type="project" value="AgBase"/>
</dbReference>
<dbReference type="GO" id="GO:0032880">
    <property type="term" value="P:regulation of protein localization"/>
    <property type="evidence" value="ECO:0000314"/>
    <property type="project" value="BHF-UCL"/>
</dbReference>
<dbReference type="Gene3D" id="6.10.250.590">
    <property type="match status" value="2"/>
</dbReference>
<dbReference type="InterPro" id="IPR000532">
    <property type="entry name" value="Glucagon_GIP_secretin_VIP"/>
</dbReference>
<dbReference type="InterPro" id="IPR046963">
    <property type="entry name" value="VIP/GHRH-like"/>
</dbReference>
<dbReference type="PANTHER" id="PTHR11213">
    <property type="entry name" value="GLUCAGON-FAMILY NEUROPEPTIDE"/>
    <property type="match status" value="1"/>
</dbReference>
<dbReference type="PANTHER" id="PTHR11213:SF5">
    <property type="entry name" value="VIP PEPTIDES"/>
    <property type="match status" value="1"/>
</dbReference>
<dbReference type="Pfam" id="PF00123">
    <property type="entry name" value="Hormone_2"/>
    <property type="match status" value="2"/>
</dbReference>
<dbReference type="SMART" id="SM00070">
    <property type="entry name" value="GLUCA"/>
    <property type="match status" value="2"/>
</dbReference>
<dbReference type="PROSITE" id="PS00260">
    <property type="entry name" value="GLUCAGON"/>
    <property type="match status" value="2"/>
</dbReference>
<proteinExistence type="evidence at protein level"/>
<reference key="1">
    <citation type="journal article" date="1981" name="Proc. Natl. Acad. Sci. U.S.A.">
        <title>Isolation and characterization of the intestinal peptide porcine PHI (PHI-27), a new member of the glucagon-secretin family.</title>
        <authorList>
            <person name="Tatemoto K."/>
            <person name="Mutt V."/>
        </authorList>
    </citation>
    <scope>PROTEIN SEQUENCE OF 1-27</scope>
    <scope>AMIDATION AT ILE-27</scope>
</reference>
<reference key="2">
    <citation type="journal article" date="1992" name="Biochem. Biophys. Res. Commun.">
        <title>Organ distribution and characterization of porcine peptides (VIP, CGRP and PHI) that increase cAMP in rat platelets.</title>
        <authorList>
            <person name="Ichiki Y."/>
            <person name="Kitamura K."/>
            <person name="Kangawa K."/>
            <person name="Kawamoto M."/>
            <person name="Matsuo H."/>
            <person name="Eto T."/>
        </authorList>
    </citation>
    <scope>PROTEIN SEQUENCE OF 1-24</scope>
    <source>
        <tissue>Duodenum</tissue>
    </source>
</reference>
<reference key="3">
    <citation type="journal article" date="1988" name="Peptides">
        <title>Isolation and characterization of a variant form of vasoactive intestinal polypeptide.</title>
        <authorList>
            <person name="Gafvelin G."/>
            <person name="Andersson M."/>
            <person name="Dimaline R."/>
            <person name="Joernvall H."/>
            <person name="Mutt V."/>
        </authorList>
    </citation>
    <scope>PROTEIN SEQUENCE OF 45-75</scope>
</reference>
<reference key="4">
    <citation type="journal article" date="1974" name="Eur. J. Biochem.">
        <title>Structure of the porcine vasoactive intestinal octacosapeptide. The amino-acid sequence. Use of kallikrein in its determination.</title>
        <authorList>
            <person name="Mutt V."/>
            <person name="Said S.I."/>
        </authorList>
    </citation>
    <scope>PROTEIN SEQUENCE OF 45-72</scope>
    <scope>AMIDATION AT ASN-72</scope>
</reference>
<reference key="5">
    <citation type="journal article" date="1974" name="J. Am. Chem. Soc.">
        <title>Synthesis of the vasoactive intestinal peptide (VIP).</title>
        <authorList>
            <person name="Bodanszky M."/>
            <person name="Klausner Y.S."/>
            <person name="Lin C.Y."/>
            <person name="Mutt V."/>
            <person name="Said S.I."/>
        </authorList>
    </citation>
    <scope>SYNTHESIS OF VIP</scope>
</reference>
<sequence>HADGVFTSDFSRLLGQLSAKKYLESLIXXXXXXXXXXXXXXXXXHSDAVFTDNYTRLRKQMAVKKYLNSILNGKR</sequence>
<comment type="function">
    <molecule>Vasoactive intestinal peptide</molecule>
    <text evidence="1">VIP is a neuropeptide involved in a diverse array of physiological processes through activating the PACAP subfamily of class B1 G protein-coupled receptors: VIP receptor 1 (VPR1) and VIP receptor 2 (VPR2). Abundantly expressed throughout the CNS and peripheral nervous systems where they primarily exert neuroprotective and immune modulatory roles (By similarity). Also causes vasodilation, lowers arterial blood pressure, stimulates myocardial contractility, increases glycogenolysis and relaxes the smooth muscle of trachea, stomach and gall bladder (By similarity).</text>
</comment>
<comment type="function">
    <molecule>Intestinal peptide PHI-27</molecule>
    <text evidence="1">PHM-27 is a bioactive form from proteolysis of the same precursor protein, that causes vasodilation. It is a potent agonist of the calcitonin receptor CALCR, with similar efficacy as calcitonin.</text>
</comment>
<comment type="subcellular location">
    <subcellularLocation>
        <location>Secreted</location>
    </subcellularLocation>
</comment>
<comment type="miscellaneous">
    <text>X's at positions 28 to 44 were included by homology with the human precursor sequence.</text>
</comment>
<comment type="similarity">
    <text evidence="4">Belongs to the glucagon family.</text>
</comment>
<feature type="peptide" id="PRO_0000011467" description="Intestinal peptide PHI-27">
    <location>
        <begin position="1"/>
        <end position="27"/>
    </location>
</feature>
<feature type="peptide" id="PRO_0000011468" description="Vasoactive intestinal peptide">
    <location>
        <begin position="45"/>
        <end position="72"/>
    </location>
</feature>
<feature type="modified residue" description="Isoleucine amide" evidence="3">
    <location>
        <position position="27"/>
    </location>
</feature>
<feature type="modified residue" description="Asparagine amide" evidence="2">
    <location>
        <position position="72"/>
    </location>
</feature>
<feature type="non-terminal residue">
    <location>
        <position position="1"/>
    </location>
</feature>
<feature type="non-terminal residue">
    <location>
        <position position="75"/>
    </location>
</feature>
<gene>
    <name type="primary">VIP</name>
</gene>
<organism>
    <name type="scientific">Sus scrofa</name>
    <name type="common">Pig</name>
    <dbReference type="NCBI Taxonomy" id="9823"/>
    <lineage>
        <taxon>Eukaryota</taxon>
        <taxon>Metazoa</taxon>
        <taxon>Chordata</taxon>
        <taxon>Craniata</taxon>
        <taxon>Vertebrata</taxon>
        <taxon>Euteleostomi</taxon>
        <taxon>Mammalia</taxon>
        <taxon>Eutheria</taxon>
        <taxon>Laurasiatheria</taxon>
        <taxon>Artiodactyla</taxon>
        <taxon>Suina</taxon>
        <taxon>Suidae</taxon>
        <taxon>Sus</taxon>
    </lineage>
</organism>